<evidence type="ECO:0000255" key="1"/>
<evidence type="ECO:0000256" key="2">
    <source>
        <dbReference type="SAM" id="MobiDB-lite"/>
    </source>
</evidence>
<evidence type="ECO:0000269" key="3">
    <source>
    </source>
</evidence>
<evidence type="ECO:0000269" key="4">
    <source>
    </source>
</evidence>
<evidence type="ECO:0000269" key="5">
    <source>
    </source>
</evidence>
<evidence type="ECO:0000269" key="6">
    <source>
    </source>
</evidence>
<evidence type="ECO:0000269" key="7">
    <source>
    </source>
</evidence>
<evidence type="ECO:0000269" key="8">
    <source>
    </source>
</evidence>
<evidence type="ECO:0000269" key="9">
    <source>
    </source>
</evidence>
<evidence type="ECO:0000269" key="10">
    <source>
    </source>
</evidence>
<evidence type="ECO:0000269" key="11">
    <source>
    </source>
</evidence>
<evidence type="ECO:0000269" key="12">
    <source>
    </source>
</evidence>
<evidence type="ECO:0000269" key="13">
    <source>
    </source>
</evidence>
<evidence type="ECO:0000269" key="14">
    <source>
    </source>
</evidence>
<evidence type="ECO:0000269" key="15">
    <source>
    </source>
</evidence>
<evidence type="ECO:0000269" key="16">
    <source>
    </source>
</evidence>
<evidence type="ECO:0000269" key="17">
    <source>
    </source>
</evidence>
<evidence type="ECO:0000269" key="18">
    <source>
    </source>
</evidence>
<evidence type="ECO:0000269" key="19">
    <source>
    </source>
</evidence>
<evidence type="ECO:0000269" key="20">
    <source>
    </source>
</evidence>
<evidence type="ECO:0000269" key="21">
    <source>
    </source>
</evidence>
<evidence type="ECO:0000269" key="22">
    <source>
    </source>
</evidence>
<evidence type="ECO:0000269" key="23">
    <source>
    </source>
</evidence>
<evidence type="ECO:0000269" key="24">
    <source>
    </source>
</evidence>
<evidence type="ECO:0000269" key="25">
    <source>
    </source>
</evidence>
<evidence type="ECO:0000269" key="26">
    <source>
    </source>
</evidence>
<evidence type="ECO:0000269" key="27">
    <source>
    </source>
</evidence>
<evidence type="ECO:0000269" key="28">
    <source>
    </source>
</evidence>
<evidence type="ECO:0000305" key="29"/>
<evidence type="ECO:0000312" key="30">
    <source>
        <dbReference type="EMBL" id="AAF49446.1"/>
    </source>
</evidence>
<evidence type="ECO:0000312" key="31">
    <source>
        <dbReference type="EMBL" id="AAG17893.1"/>
    </source>
</evidence>
<evidence type="ECO:0000312" key="32">
    <source>
        <dbReference type="EMBL" id="AAL13758.1"/>
    </source>
</evidence>
<evidence type="ECO:0000312" key="33">
    <source>
        <dbReference type="FlyBase" id="FBgn0036641"/>
    </source>
</evidence>
<evidence type="ECO:0000312" key="34">
    <source>
        <dbReference type="PDB" id="4V98"/>
    </source>
</evidence>
<evidence type="ECO:0000312" key="35">
    <source>
        <dbReference type="Proteomes" id="UP000000803"/>
    </source>
</evidence>
<evidence type="ECO:0007829" key="36">
    <source>
        <dbReference type="PDB" id="4V98"/>
    </source>
</evidence>
<protein>
    <recommendedName>
        <fullName evidence="33">Survival motor neuron protein</fullName>
    </recommendedName>
</protein>
<name>SMN_DROME</name>
<comment type="function">
    <text evidence="5 9 12 13 14 16 18 19 20 21 22 23 24 25 28">Core component of the survival motor neuron (SMN) complex that plays an essential role in spliceosomal small nuclear ribonucleoprotein (snRNP) assembly in the cytoplasm, is required for pre-mRNA splicing in the nucleus and acts as a chaperone that discriminates target and non-target RNAs of Sm proteins (PubMed:18923150, PubMed:23063130, PubMed:23063131, PubMed:30563832). A major component of nuclear bodies known as gems (gemini of Cajal bodies) thought to be storage depots of excess SMN complexes (PubMed:21627586). Required for normal expression of spliceosomal snRNAs and for U12 intron splicing. Required in cholinergic neurons, but not in motor neurons, to ensure correct splicing and proper levels of stas mRNA and normal neurotransmitter release by motor neurons (PubMed:23063130, PubMed:23063131). However, Smn is required in motor neurons, but not in cholinergic neurons, for normal motor behavior but plays no role in synaptic transmission according to a report (PubMed:23103409). In both muscle and neurons, required for the formation of a normal neuromuscular junction (NMJ) structure. Plays a neuron-specific role in long-term homeostatic compensation at the larval NMJ. In the thorax of adult flies, required for Act88F, an indirect flight muscle (IFM)-specific actin, expression and for proper IFM myofibril formation. In nurse cells, oocytes and follicle cells, required to maintain normal organization of nuclear compartments including chromosomes, nucleoli, Cajal bodies, histone locus bodies and heterochromatin. Required for the functional integrity of the cytoplasmic U snRNP body (U body) and P body. Required in dividing postembryonic neuroblasts (pNBs) for the correct basal localization of mira. The tight regulation of its expression is critical for stem cell division, proliferation and differentiation in male germline and developing central nervous system (CNS). Required for tracheal terminal cell lumen formation.</text>
</comment>
<comment type="subunit">
    <text evidence="3 5 6 8 9 11 12 14 15 20 25 26 27 28">Homodimer (via C-terminal region) (PubMed:11113446, PubMed:12783845, PubMed:22813737). Component of the core survival motor neuron (SMN) complex composed of Smn, Gem2, Gem3, rig/Gem5 and one of 3 almost identical Gem4 paralogs encoded by Glos/Gem4a, Gem4b or Gem4c (PubMed:30563832). Interacts with Gem3 (via C-terminus); the interaction is direct and stabilizes Smn (PubMed:18923150, PubMed:19023405). Part of a minimal SMN complex composed of Smn and Gem2 only; this complex is active in UsnRNP assembly (PubMed:18621711, PubMed:23333303). The SMN complex associates with the entire set of spliceosomal snRNP Sm proteins, SmB, SmD1, SmD2, SmD3, SmE, SmF and SmG, and with the snRNP-specific proteins snRNP-U1-70K, U2A, snf/U1A and U5-116KD (PubMed:18621711, PubMed:23333303). Interacts with Glos/Gem4a; the interaction is probably indirect (PubMed:28949413, PubMed:30563832). Interacts with Sbat and Vlet; Sbat and Vlet, along with Hez, may form an accessory subcomplex involved in SMN complex function (PubMed:28949413). Interacts weakly with Gem3 (PubMed:18621711). Interacts with SmB and SmD1; the interaction is favored by methylation of the Sm proteins (PubMed:16753561, PubMed:18369183). Interacts with Actn; the interaction occurs in thoracic tissues and in adult flies (PubMed:17353360). Interacts with Rpp20 (PubMed:14715275). Interacts with msk and Snup; these interactions are RNA-dependent (PubMed:23885126).</text>
</comment>
<comment type="interaction">
    <interactant intactId="EBI-185315">
        <id>Q9VV74</id>
    </interactant>
    <interactant intactId="EBI-108834">
        <id>Q9VVX0</id>
        <label>Gem2</label>
    </interactant>
    <organismsDiffer>false</organismsDiffer>
    <experiments>6</experiments>
</comment>
<comment type="interaction">
    <interactant intactId="EBI-185315">
        <id>Q9VV74</id>
    </interactant>
    <interactant intactId="EBI-126900">
        <id>Q9V3C4</id>
        <label>Gem3</label>
    </interactant>
    <organismsDiffer>false</organismsDiffer>
    <experiments>3</experiments>
</comment>
<comment type="interaction">
    <interactant intactId="EBI-185315">
        <id>Q9VV74</id>
    </interactant>
    <interactant intactId="EBI-1151669">
        <id>Q2MGL3</id>
        <label>Rpp20</label>
    </interactant>
    <organismsDiffer>false</organismsDiffer>
    <experiments>3</experiments>
</comment>
<comment type="interaction">
    <interactant intactId="EBI-185315">
        <id>Q9VV74</id>
    </interactant>
    <interactant intactId="EBI-185315">
        <id>Q9VV74</id>
        <label>Smn</label>
    </interactant>
    <organismsDiffer>false</organismsDiffer>
    <experiments>4</experiments>
</comment>
<comment type="interaction">
    <interactant intactId="EBI-185315">
        <id>Q9VV74</id>
    </interactant>
    <interactant intactId="EBI-395421">
        <id>Q16637</id>
        <label>SMN2</label>
    </interactant>
    <organismsDiffer>true</organismsDiffer>
    <experiments>2</experiments>
</comment>
<comment type="subcellular location">
    <subcellularLocation>
        <location evidence="7 9 10 13 14 16 17 18 19">Cytoplasm</location>
    </subcellularLocation>
    <subcellularLocation>
        <location evidence="14 19">Nucleus</location>
    </subcellularLocation>
    <subcellularLocation>
        <location evidence="10 16">Cytoplasm</location>
        <location evidence="10 16">U-body</location>
    </subcellularLocation>
    <subcellularLocation>
        <location evidence="7 9 10 13 16 17 18 19">Nucleus</location>
        <location evidence="7 9 10 13 16 17 18 19">Gem</location>
    </subcellularLocation>
    <subcellularLocation>
        <location evidence="14">Nucleus</location>
        <location evidence="14">Cajal body</location>
    </subcellularLocation>
    <subcellularLocation>
        <location evidence="7 9 10 13 16 17 18">Cytoplasm</location>
        <location evidence="7 9 10 13 16 17 18">Myofibril</location>
        <location evidence="7 9 10 13 16 17 18">Sarcomere</location>
        <location evidence="7 9 10 13 16 17 18">I band</location>
    </subcellularLocation>
    <subcellularLocation>
        <location evidence="7 9 10 13 16 17 18">Cytoplasm</location>
        <location evidence="7 9 10 13 16 17 18">Myofibril</location>
        <location evidence="7 9 10 13 16 17 18">Sarcomere</location>
        <location evidence="7 9 10 13 16 17 18">Z line</location>
    </subcellularLocation>
    <text evidence="7 9 10 13 16 17 18 19">High expression detected in the cytoplasm of female germline stem cells and cystoblast which persists up to stage 10 egg chambers. Accumulates in the cytoplasm of dividing pNBs. Colocalizes with Actn at the Z-line of IFMs. Expression concentrates at the post-synaptic region of NMJs in larval brain. Component of nuclear gem (Gemini of Cajal bodies) structures that partially colocalize with or closely appose Cajal bodies (PubMed:21627586).</text>
</comment>
<comment type="tissue specificity">
    <text evidence="5 7 9 10 16 18">In late first instar larvae, expressed in pNBs. Expression increases as the pNBs enlarge, with the highest accumulation observed in dividing pNBs of second and third instar larvae. Enriched in type ID (thoracic and brain lobe), type IA and all the mira-expressing NBs of the brain lobes. In larvae, also expressed in muscle fibers. In larval and adult testis, expressed in germline stem cells and gonialblast, expression decreases as cells differentiate into cysts and spermatocytes. In adult fly thorax, expressed in the IFMs. In adult ovary, expressed in germline stem cells, cystoblasts, follicle cells, nurse cells and oocyte (at protein level). Also expressed in larval salivary glands.</text>
</comment>
<comment type="developmental stage">
    <text evidence="3 5 7 9 13">Expressed both maternally and zygotically. Expressed ubiquitously throughout development. Expression is high during embryogenesis but decreases 30-fold in adult flies (at protein level).</text>
</comment>
<comment type="disruption phenotype">
    <text evidence="5 9 13 14 16 18 20 21 22 23">Embryos lacking maternal and zygotic Smn die between 0 and 4 hours after egg laying. Zygotic mutants form pseudopupae or fail to pupate and instead persist as third instar larvae, often surviving at this stage for several days (PubMed:18923150). Larvae are smaller, developmentally arrested and have reduced motor function (PubMed:18923150). Mutant larvae exhibit reduced CNS, testes and muscle size, decreased locomotion and altered rhythmic motor activity. At the NMJ, mutant larvae show an overall decrease in the number of synaptic boutons, but an increase in enlarged ones, loss of large glutamate receptor clusters and an aberrant increase in evoked excitatory postsynaptic potential (eEPSP) amplitude and in miniature EPSP frequency. Mutant larvae also show defective mira subcellular localization in pNBs. Mutant larvae show a decrease of spliceosomal snRNA levels and splicing defects in U12 intron-containing genes (PubMed:23063131). But appreciable splicing defects in U12 intron-containing genes are not observed in mutant larvae, although a decrease in spliceosomal snRNA levels is detected, in PubMed:22813737. RNAi-mediated knockdown in tracheal cells results in defective gas-filling lumen in terminal branches (PubMed:23029159).</text>
</comment>
<comment type="similarity">
    <text evidence="1">Belongs to the SMN family.</text>
</comment>
<reference evidence="29 31" key="1">
    <citation type="journal article" date="2000" name="FEBS Lett.">
        <title>Disruption of SMN function by ectopic expression of the human SMN gene in Drosophila.</title>
        <authorList>
            <person name="Miguel-Aliaga I."/>
            <person name="Chan Y.B."/>
            <person name="Davies K.E."/>
            <person name="van den Heuvel M."/>
        </authorList>
    </citation>
    <scope>NUCLEOTIDE SEQUENCE [MRNA]</scope>
    <scope>SUBUNIT</scope>
    <scope>DEVELOPMENTAL STAGE</scope>
</reference>
<reference evidence="30" key="2">
    <citation type="journal article" date="2000" name="Science">
        <title>The genome sequence of Drosophila melanogaster.</title>
        <authorList>
            <person name="Adams M.D."/>
            <person name="Celniker S.E."/>
            <person name="Holt R.A."/>
            <person name="Evans C.A."/>
            <person name="Gocayne J.D."/>
            <person name="Amanatides P.G."/>
            <person name="Scherer S.E."/>
            <person name="Li P.W."/>
            <person name="Hoskins R.A."/>
            <person name="Galle R.F."/>
            <person name="George R.A."/>
            <person name="Lewis S.E."/>
            <person name="Richards S."/>
            <person name="Ashburner M."/>
            <person name="Henderson S.N."/>
            <person name="Sutton G.G."/>
            <person name="Wortman J.R."/>
            <person name="Yandell M.D."/>
            <person name="Zhang Q."/>
            <person name="Chen L.X."/>
            <person name="Brandon R.C."/>
            <person name="Rogers Y.-H.C."/>
            <person name="Blazej R.G."/>
            <person name="Champe M."/>
            <person name="Pfeiffer B.D."/>
            <person name="Wan K.H."/>
            <person name="Doyle C."/>
            <person name="Baxter E.G."/>
            <person name="Helt G."/>
            <person name="Nelson C.R."/>
            <person name="Miklos G.L.G."/>
            <person name="Abril J.F."/>
            <person name="Agbayani A."/>
            <person name="An H.-J."/>
            <person name="Andrews-Pfannkoch C."/>
            <person name="Baldwin D."/>
            <person name="Ballew R.M."/>
            <person name="Basu A."/>
            <person name="Baxendale J."/>
            <person name="Bayraktaroglu L."/>
            <person name="Beasley E.M."/>
            <person name="Beeson K.Y."/>
            <person name="Benos P.V."/>
            <person name="Berman B.P."/>
            <person name="Bhandari D."/>
            <person name="Bolshakov S."/>
            <person name="Borkova D."/>
            <person name="Botchan M.R."/>
            <person name="Bouck J."/>
            <person name="Brokstein P."/>
            <person name="Brottier P."/>
            <person name="Burtis K.C."/>
            <person name="Busam D.A."/>
            <person name="Butler H."/>
            <person name="Cadieu E."/>
            <person name="Center A."/>
            <person name="Chandra I."/>
            <person name="Cherry J.M."/>
            <person name="Cawley S."/>
            <person name="Dahlke C."/>
            <person name="Davenport L.B."/>
            <person name="Davies P."/>
            <person name="de Pablos B."/>
            <person name="Delcher A."/>
            <person name="Deng Z."/>
            <person name="Mays A.D."/>
            <person name="Dew I."/>
            <person name="Dietz S.M."/>
            <person name="Dodson K."/>
            <person name="Doup L.E."/>
            <person name="Downes M."/>
            <person name="Dugan-Rocha S."/>
            <person name="Dunkov B.C."/>
            <person name="Dunn P."/>
            <person name="Durbin K.J."/>
            <person name="Evangelista C.C."/>
            <person name="Ferraz C."/>
            <person name="Ferriera S."/>
            <person name="Fleischmann W."/>
            <person name="Fosler C."/>
            <person name="Gabrielian A.E."/>
            <person name="Garg N.S."/>
            <person name="Gelbart W.M."/>
            <person name="Glasser K."/>
            <person name="Glodek A."/>
            <person name="Gong F."/>
            <person name="Gorrell J.H."/>
            <person name="Gu Z."/>
            <person name="Guan P."/>
            <person name="Harris M."/>
            <person name="Harris N.L."/>
            <person name="Harvey D.A."/>
            <person name="Heiman T.J."/>
            <person name="Hernandez J.R."/>
            <person name="Houck J."/>
            <person name="Hostin D."/>
            <person name="Houston K.A."/>
            <person name="Howland T.J."/>
            <person name="Wei M.-H."/>
            <person name="Ibegwam C."/>
            <person name="Jalali M."/>
            <person name="Kalush F."/>
            <person name="Karpen G.H."/>
            <person name="Ke Z."/>
            <person name="Kennison J.A."/>
            <person name="Ketchum K.A."/>
            <person name="Kimmel B.E."/>
            <person name="Kodira C.D."/>
            <person name="Kraft C.L."/>
            <person name="Kravitz S."/>
            <person name="Kulp D."/>
            <person name="Lai Z."/>
            <person name="Lasko P."/>
            <person name="Lei Y."/>
            <person name="Levitsky A.A."/>
            <person name="Li J.H."/>
            <person name="Li Z."/>
            <person name="Liang Y."/>
            <person name="Lin X."/>
            <person name="Liu X."/>
            <person name="Mattei B."/>
            <person name="McIntosh T.C."/>
            <person name="McLeod M.P."/>
            <person name="McPherson D."/>
            <person name="Merkulov G."/>
            <person name="Milshina N.V."/>
            <person name="Mobarry C."/>
            <person name="Morris J."/>
            <person name="Moshrefi A."/>
            <person name="Mount S.M."/>
            <person name="Moy M."/>
            <person name="Murphy B."/>
            <person name="Murphy L."/>
            <person name="Muzny D.M."/>
            <person name="Nelson D.L."/>
            <person name="Nelson D.R."/>
            <person name="Nelson K.A."/>
            <person name="Nixon K."/>
            <person name="Nusskern D.R."/>
            <person name="Pacleb J.M."/>
            <person name="Palazzolo M."/>
            <person name="Pittman G.S."/>
            <person name="Pan S."/>
            <person name="Pollard J."/>
            <person name="Puri V."/>
            <person name="Reese M.G."/>
            <person name="Reinert K."/>
            <person name="Remington K."/>
            <person name="Saunders R.D.C."/>
            <person name="Scheeler F."/>
            <person name="Shen H."/>
            <person name="Shue B.C."/>
            <person name="Siden-Kiamos I."/>
            <person name="Simpson M."/>
            <person name="Skupski M.P."/>
            <person name="Smith T.J."/>
            <person name="Spier E."/>
            <person name="Spradling A.C."/>
            <person name="Stapleton M."/>
            <person name="Strong R."/>
            <person name="Sun E."/>
            <person name="Svirskas R."/>
            <person name="Tector C."/>
            <person name="Turner R."/>
            <person name="Venter E."/>
            <person name="Wang A.H."/>
            <person name="Wang X."/>
            <person name="Wang Z.-Y."/>
            <person name="Wassarman D.A."/>
            <person name="Weinstock G.M."/>
            <person name="Weissenbach J."/>
            <person name="Williams S.M."/>
            <person name="Woodage T."/>
            <person name="Worley K.C."/>
            <person name="Wu D."/>
            <person name="Yang S."/>
            <person name="Yao Q.A."/>
            <person name="Ye J."/>
            <person name="Yeh R.-F."/>
            <person name="Zaveri J.S."/>
            <person name="Zhan M."/>
            <person name="Zhang G."/>
            <person name="Zhao Q."/>
            <person name="Zheng L."/>
            <person name="Zheng X.H."/>
            <person name="Zhong F.N."/>
            <person name="Zhong W."/>
            <person name="Zhou X."/>
            <person name="Zhu S.C."/>
            <person name="Zhu X."/>
            <person name="Smith H.O."/>
            <person name="Gibbs R.A."/>
            <person name="Myers E.W."/>
            <person name="Rubin G.M."/>
            <person name="Venter J.C."/>
        </authorList>
    </citation>
    <scope>NUCLEOTIDE SEQUENCE [LARGE SCALE GENOMIC DNA]</scope>
    <source>
        <strain>Berkeley</strain>
    </source>
</reference>
<reference evidence="30" key="3">
    <citation type="journal article" date="2002" name="Genome Biol.">
        <title>Annotation of the Drosophila melanogaster euchromatic genome: a systematic review.</title>
        <authorList>
            <person name="Misra S."/>
            <person name="Crosby M.A."/>
            <person name="Mungall C.J."/>
            <person name="Matthews B.B."/>
            <person name="Campbell K.S."/>
            <person name="Hradecky P."/>
            <person name="Huang Y."/>
            <person name="Kaminker J.S."/>
            <person name="Millburn G.H."/>
            <person name="Prochnik S.E."/>
            <person name="Smith C.D."/>
            <person name="Tupy J.L."/>
            <person name="Whitfield E.J."/>
            <person name="Bayraktaroglu L."/>
            <person name="Berman B.P."/>
            <person name="Bettencourt B.R."/>
            <person name="Celniker S.E."/>
            <person name="de Grey A.D.N.J."/>
            <person name="Drysdale R.A."/>
            <person name="Harris N.L."/>
            <person name="Richter J."/>
            <person name="Russo S."/>
            <person name="Schroeder A.J."/>
            <person name="Shu S.Q."/>
            <person name="Stapleton M."/>
            <person name="Yamada C."/>
            <person name="Ashburner M."/>
            <person name="Gelbart W.M."/>
            <person name="Rubin G.M."/>
            <person name="Lewis S.E."/>
        </authorList>
    </citation>
    <scope>GENOME REANNOTATION</scope>
    <source>
        <strain>Berkeley</strain>
    </source>
</reference>
<reference evidence="32" key="4">
    <citation type="journal article" date="2002" name="Genome Biol.">
        <title>A Drosophila full-length cDNA resource.</title>
        <authorList>
            <person name="Stapleton M."/>
            <person name="Carlson J.W."/>
            <person name="Brokstein P."/>
            <person name="Yu C."/>
            <person name="Champe M."/>
            <person name="George R.A."/>
            <person name="Guarin H."/>
            <person name="Kronmiller B."/>
            <person name="Pacleb J.M."/>
            <person name="Park S."/>
            <person name="Wan K.H."/>
            <person name="Rubin G.M."/>
            <person name="Celniker S.E."/>
        </authorList>
    </citation>
    <scope>NUCLEOTIDE SEQUENCE [LARGE SCALE MRNA]</scope>
    <source>
        <strain evidence="4 32">Berkeley</strain>
        <tissue evidence="4">Larva</tissue>
        <tissue evidence="4">Pupae</tissue>
    </source>
</reference>
<reference evidence="29" key="5">
    <citation type="journal article" date="2003" name="Hum. Mol. Genet.">
        <title>Neuromuscular defects in a Drosophila survival motor neuron gene mutant.</title>
        <authorList>
            <person name="Chan Y.B."/>
            <person name="Miguel-Aliaga I."/>
            <person name="Franks C."/>
            <person name="Thomas N."/>
            <person name="Trulzsch B."/>
            <person name="Sattelle D.B."/>
            <person name="Davies K.E."/>
            <person name="van den Heuvel M."/>
        </authorList>
    </citation>
    <scope>FUNCTION</scope>
    <scope>SUBUNIT</scope>
    <scope>TISSUE SPECIFICITY</scope>
    <scope>DEVELOPMENTAL STAGE</scope>
    <scope>DISRUPTION PHENOTYPE</scope>
    <scope>MUTAGENESIS OF SER-201 AND GLY-202</scope>
</reference>
<reference evidence="29" key="6">
    <citation type="journal article" date="2004" name="Biochem. Biophys. Res. Commun.">
        <title>Rpp20 interacts with SMN and is re-distributed into SMN granules in response to stress.</title>
        <authorList>
            <person name="Hua Y."/>
            <person name="Zhou J."/>
        </authorList>
    </citation>
    <scope>SUBUNIT</scope>
    <scope>INTERACTION WITH RPP20</scope>
</reference>
<reference evidence="29" key="7">
    <citation type="journal article" date="2006" name="Curr. Biol.">
        <title>The Sm-protein methyltransferase, dart5, is essential for germ-cell specification and maintenance.</title>
        <authorList>
            <person name="Gonsalvez G.B."/>
            <person name="Rajendra T.K."/>
            <person name="Tian L."/>
            <person name="Matera A.G."/>
        </authorList>
    </citation>
    <scope>INTERACTION WITH SMB</scope>
</reference>
<reference evidence="29" key="8">
    <citation type="journal article" date="2006" name="J. Cell Biol.">
        <title>The Drosophila melanogaster Cajal body.</title>
        <authorList>
            <person name="Liu J.L."/>
            <person name="Murphy C."/>
            <person name="Buszczak M."/>
            <person name="Clatterbuck S."/>
            <person name="Goodman R."/>
            <person name="Gall J.G."/>
        </authorList>
    </citation>
    <scope>SUBCELLULAR LOCATION</scope>
    <scope>TISSUE SPECIFICITY</scope>
    <scope>DEVELOPMENTAL STAGE</scope>
</reference>
<reference evidence="29" key="9">
    <citation type="journal article" date="2007" name="J. Cell Biol.">
        <title>A Drosophila melanogaster model of spinal muscular atrophy reveals a function for SMN in striated muscle.</title>
        <authorList>
            <person name="Rajendra T.K."/>
            <person name="Gonsalvez G.B."/>
            <person name="Walker M.P."/>
            <person name="Shpargel K.B."/>
            <person name="Salz H.K."/>
            <person name="Matera A.G."/>
        </authorList>
    </citation>
    <scope>FUNCTION</scope>
    <scope>SUBUNIT</scope>
    <scope>INTERACTION WITH ACTN</scope>
    <scope>SUBCELLULAR LOCATION</scope>
    <scope>TISSUE SPECIFICITY</scope>
    <scope>DEVELOPMENTAL STAGE</scope>
    <scope>DISRUPTION PHENOTYPE</scope>
</reference>
<reference evidence="29" key="10">
    <citation type="journal article" date="2007" name="Proc. Natl. Acad. Sci. U.S.A.">
        <title>U bodies are cytoplasmic structures that contain uridine-rich small nuclear ribonucleoproteins and associate with P bodies.</title>
        <authorList>
            <person name="Liu J.L."/>
            <person name="Gall J.G."/>
        </authorList>
    </citation>
    <scope>SUBCELLULAR LOCATION</scope>
    <scope>TISSUE SPECIFICITY</scope>
</reference>
<reference key="11">
    <citation type="journal article" date="2008" name="PLoS Genet.">
        <title>A motor function for the DEAD-box RNA helicase, Gemin3, in Drosophila.</title>
        <authorList>
            <person name="Cauchi R.J."/>
            <person name="Davies K.E."/>
            <person name="Liu J.L."/>
        </authorList>
    </citation>
    <scope>INTERACTION WITH GEM3</scope>
</reference>
<reference evidence="29" key="12">
    <citation type="journal article" date="2008" name="PLoS ONE">
        <title>Modeling spinal muscular atrophy in Drosophila.</title>
        <authorList>
            <person name="Chang H.C."/>
            <person name="Dimlich D.N."/>
            <person name="Yokokura T."/>
            <person name="Mukherjee A."/>
            <person name="Kankel M.W."/>
            <person name="Sen A."/>
            <person name="Sridhar V."/>
            <person name="Fulga T.A."/>
            <person name="Hart A.C."/>
            <person name="Van Vactor D."/>
            <person name="Artavanis-Tsakonas S."/>
        </authorList>
    </citation>
    <scope>FUNCTION</scope>
    <scope>SUBCELLULAR LOCATION</scope>
    <scope>DEVELOPMENTAL STAGE</scope>
    <scope>DISRUPTION PHENOTYPE</scope>
</reference>
<reference evidence="29" key="13">
    <citation type="journal article" date="2008" name="Proc. Natl. Acad. Sci. U.S.A.">
        <title>Evolution of an RNP assembly system: a minimal SMN complex facilitates formation of UsnRNPs in Drosophila melanogaster.</title>
        <authorList>
            <person name="Kroiss M."/>
            <person name="Schultz J."/>
            <person name="Wiesner J."/>
            <person name="Chari A."/>
            <person name="Sickmann A."/>
            <person name="Fischer U."/>
        </authorList>
    </citation>
    <scope>FUNCTION</scope>
    <scope>IDENTIFICATION IN THE SMN COMPLEX</scope>
    <scope>INTERACTION WITH THE SPLICEOSOME USNRNP PROTEINS SNRNP-U1-70K</scope>
    <scope>U2A</scope>
    <scope>SNF/U1A AND U5-116KD</scope>
    <scope>INTERACTION WITH THE SNRNP SM PROTEINS</scope>
    <scope>INTERACTION WITH GEM3</scope>
</reference>
<reference evidence="29" key="14">
    <citation type="journal article" date="2008" name="RNA">
        <title>Sm protein methylation is dispensable for snRNP assembly in Drosophila melanogaster.</title>
        <authorList>
            <person name="Gonsalvez G.B."/>
            <person name="Praveen K."/>
            <person name="Hicks A.J."/>
            <person name="Tian L."/>
            <person name="Matera A.G."/>
        </authorList>
    </citation>
    <scope>INTERACTION WITH SMD1</scope>
</reference>
<reference evidence="29" key="15">
    <citation type="journal article" date="2009" name="Dev. Biol.">
        <title>The spinal muscular atrophy protein SMN affects Drosophila germline nuclear organization through the U body-P body pathway.</title>
        <authorList>
            <person name="Lee L."/>
            <person name="Davies S.E."/>
            <person name="Liu J.L."/>
        </authorList>
    </citation>
    <scope>FUNCTION</scope>
    <scope>SUBCELLULAR LOCATION</scope>
    <scope>TISSUE SPECIFICITY</scope>
    <scope>DISRUPTION PHENOTYPE</scope>
</reference>
<reference key="16">
    <citation type="journal article" date="2009" name="Mol. Biol. Cell">
        <title>Gemin3 is an essential gene required for larval motor function and pupation in Drosophila.</title>
        <authorList>
            <person name="Shpargel K.B."/>
            <person name="Praveen K."/>
            <person name="Rajendra T.K."/>
            <person name="Matera A.G."/>
        </authorList>
    </citation>
    <scope>FUNCTION</scope>
    <scope>INTERACTION WITH GEM3</scope>
    <scope>SUBCELLULAR LOCATION</scope>
    <scope>DISRUPTION PHENOTYPE</scope>
</reference>
<reference evidence="29" key="17">
    <citation type="journal article" date="2010" name="Exp. Cell Res.">
        <title>Drosophila SMN complex proteins Gemin2, Gemin3, and Gemin5 are components of U bodies.</title>
        <authorList>
            <person name="Cauchi R.J."/>
            <person name="Sanchez-Pulido L."/>
            <person name="Liu J.L."/>
        </authorList>
    </citation>
    <scope>SUBCELLULAR LOCATION</scope>
</reference>
<reference key="18">
    <citation type="journal article" date="2011" name="Cell Biol. Int.">
        <title>Gem formation upon constitutive Gemin3 overexpression in Drosophila.</title>
        <authorList>
            <person name="Cauchi R.J."/>
        </authorList>
    </citation>
    <scope>FUNCTION</scope>
    <scope>SUBCELLULAR LOCATION</scope>
</reference>
<reference evidence="29" key="19">
    <citation type="journal article" date="2011" name="PLoS Genet.">
        <title>Survival motor neuron protein regulates stem cell division, proliferation, and differentiation in Drosophila.</title>
        <authorList>
            <person name="Grice S.J."/>
            <person name="Liu J.L."/>
        </authorList>
    </citation>
    <scope>FUNCTION</scope>
    <scope>SUBCELLULAR LOCATION</scope>
    <scope>TISSUE SPECIFICITY</scope>
    <scope>DISRUPTION PHENOTYPE</scope>
</reference>
<reference evidence="29" key="20">
    <citation type="journal article" date="2012" name="Brain Res.">
        <title>Behavioral and electrophysiological outcomes of tissue-specific Smn knockdown in Drosophila melanogaster.</title>
        <authorList>
            <person name="Timmerman C."/>
            <person name="Sanyal S."/>
        </authorList>
    </citation>
    <scope>FUNCTION</scope>
</reference>
<reference evidence="29" key="21">
    <citation type="journal article" date="2012" name="Cell">
        <title>SMN is required for sensory-motor circuit function in Drosophila.</title>
        <authorList>
            <person name="Imlach W.L."/>
            <person name="Beck E.S."/>
            <person name="Choi B.J."/>
            <person name="Lotti F."/>
            <person name="Pellizzoni L."/>
            <person name="McCabe B.D."/>
        </authorList>
    </citation>
    <scope>FUNCTION</scope>
    <scope>DISRUPTION PHENOTYPE</scope>
</reference>
<reference evidence="29" key="22">
    <citation type="journal article" date="2012" name="Cell">
        <title>An SMN-dependent U12 splicing event essential for motor circuit function.</title>
        <authorList>
            <person name="Lotti F."/>
            <person name="Imlach W.L."/>
            <person name="Saieva L."/>
            <person name="Beck E.S."/>
            <person name="Hao le T."/>
            <person name="Li D.K."/>
            <person name="Jiao W."/>
            <person name="Mentis G.Z."/>
            <person name="Beattie C.E."/>
            <person name="McCabe B.D."/>
            <person name="Pellizzoni L."/>
        </authorList>
    </citation>
    <scope>FUNCTION</scope>
    <scope>DISRUPTION PHENOTYPE</scope>
</reference>
<reference evidence="29" key="23">
    <citation type="journal article" date="2012" name="Cell Rep.">
        <title>A Drosophila model of spinal muscular atrophy uncouples snRNP biogenesis functions of survival motor neuron from locomotion and viability defects.</title>
        <authorList>
            <person name="Praveen K."/>
            <person name="Wen Y."/>
            <person name="Matera A.G."/>
        </authorList>
    </citation>
    <scope>FUNCTION</scope>
    <scope>SUBUNIT</scope>
    <scope>DISRUPTION PHENOTYPE</scope>
    <scope>MUTAGENESIS OF ASP-20; PHE-70; TYR-203; THR-205 AND GLY-206</scope>
</reference>
<reference evidence="29" key="24">
    <citation type="journal article" date="2012" name="PLoS ONE">
        <title>Drosophila Zpr1 (Zinc finger protein 1) is required downstream of both EGFR and FGFR signaling in tracheal subcellular lumen formation.</title>
        <authorList>
            <person name="Ruiz O.E."/>
            <person name="Nikolova L.S."/>
            <person name="Metzstein M.M."/>
        </authorList>
    </citation>
    <scope>FUNCTION</scope>
    <scope>DISRUPTION PHENOTYPE</scope>
</reference>
<reference evidence="29" key="25">
    <citation type="journal article" date="2013" name="Mol. Biol. Cell">
        <title>Identification and characterization of Drosophila Snurportin reveals a role for the import receptor Moleskin/Importin7 in snRNP biogenesis.</title>
        <authorList>
            <person name="Natalizio A.H."/>
            <person name="Matera A.G."/>
        </authorList>
    </citation>
    <scope>INTERACTION WITH MSK AND SNUP</scope>
</reference>
<reference key="26">
    <citation type="journal article" date="2017" name="FEBS Lett.">
        <title>Novel interactors of the Drosophila Survival Motor Neuron (SMN) Complex suggest its full conservation.</title>
        <authorList>
            <person name="Lanfranco M."/>
            <person name="Cacciottolo R."/>
            <person name="Borg R.M."/>
            <person name="Vassallo N."/>
            <person name="Juge F."/>
            <person name="Bordonne R."/>
            <person name="Cauchi R.J."/>
        </authorList>
    </citation>
    <scope>INTERACTION WITH GLOS; SBAT AND VLET</scope>
</reference>
<reference key="27">
    <citation type="journal article" date="2019" name="G3 (Bethesda)">
        <title>Composition of the Survival Motor Neuron (SMN) Complex in Drosophila melanogaster.</title>
        <authorList>
            <person name="Matera A.G."/>
            <person name="Raimer A.C."/>
            <person name="Schmidt C.A."/>
            <person name="Kelly J.A."/>
            <person name="Droby G.N."/>
            <person name="Baillat D."/>
            <person name="Ten Have S."/>
            <person name="Lamond A.I."/>
            <person name="Wagner E.J."/>
            <person name="Gray K.M."/>
        </authorList>
    </citation>
    <scope>FUNCTION</scope>
    <scope>IDENTIFICATION IN THE SMN COMPLEX</scope>
    <scope>INTERACTION WITH GLOS</scope>
    <scope>IDENTIFICATION BY MASS SPECTROMETRY</scope>
</reference>
<reference evidence="34" key="28">
    <citation type="journal article" date="2013" name="Mol. Cell">
        <title>Structural basis of assembly chaperone-mediated snRNP formation.</title>
        <authorList>
            <person name="Grimm C."/>
            <person name="Chari A."/>
            <person name="Pelz J.P."/>
            <person name="Kuper J."/>
            <person name="Kisker C."/>
            <person name="Diederichs K."/>
            <person name="Stark H."/>
            <person name="Schindelin H."/>
            <person name="Fischer U."/>
        </authorList>
    </citation>
    <scope>X-RAY CRYSTALLOGRAPHY (3.10 ANGSTROMS) OF 1-122</scope>
    <scope>FUNCTION</scope>
    <scope>SUBUNIT</scope>
</reference>
<dbReference type="EMBL" id="AF296281">
    <property type="protein sequence ID" value="AAG17893.1"/>
    <property type="molecule type" value="mRNA"/>
</dbReference>
<dbReference type="EMBL" id="AE014296">
    <property type="protein sequence ID" value="AAF49446.1"/>
    <property type="molecule type" value="Genomic_DNA"/>
</dbReference>
<dbReference type="EMBL" id="AE014296">
    <property type="protein sequence ID" value="AGB94647.1"/>
    <property type="molecule type" value="Genomic_DNA"/>
</dbReference>
<dbReference type="EMBL" id="AY058529">
    <property type="protein sequence ID" value="AAL13758.1"/>
    <property type="molecule type" value="mRNA"/>
</dbReference>
<dbReference type="RefSeq" id="NP_001261954.1">
    <property type="nucleotide sequence ID" value="NM_001275025.1"/>
</dbReference>
<dbReference type="RefSeq" id="NP_524112.1">
    <property type="nucleotide sequence ID" value="NM_079388.4"/>
</dbReference>
<dbReference type="PDB" id="4V98">
    <property type="method" value="X-ray"/>
    <property type="resolution" value="3.10 A"/>
    <property type="chains" value="A1/AE/AM/AU/Ac/Ak/As/B1/BE/BM/BU/Bc/Bk/Bs/CE/CM/CU/Cc/Ck/Cs=1-122"/>
</dbReference>
<dbReference type="PDBsum" id="4V98"/>
<dbReference type="SASBDB" id="Q9VV74"/>
<dbReference type="SMR" id="Q9VV74"/>
<dbReference type="BioGRID" id="65147">
    <property type="interactions" value="59"/>
</dbReference>
<dbReference type="ComplexPortal" id="CPX-8008">
    <property type="entry name" value="Survival motor neuron complex, Gem4A variant"/>
</dbReference>
<dbReference type="ComplexPortal" id="CPX-8066">
    <property type="entry name" value="Survival motor neuron complex, Gem4B variant"/>
</dbReference>
<dbReference type="ComplexPortal" id="CPX-8067">
    <property type="entry name" value="Survival motor neuron complex, Gem4C variant"/>
</dbReference>
<dbReference type="DIP" id="DIP-18223N"/>
<dbReference type="FunCoup" id="Q9VV74">
    <property type="interactions" value="787"/>
</dbReference>
<dbReference type="IntAct" id="Q9VV74">
    <property type="interactions" value="68"/>
</dbReference>
<dbReference type="STRING" id="7227.FBpp0302954"/>
<dbReference type="PaxDb" id="7227-FBpp0302954"/>
<dbReference type="ABCD" id="Q9VV74">
    <property type="antibodies" value="1 sequenced antibody"/>
</dbReference>
<dbReference type="DNASU" id="39844"/>
<dbReference type="EnsemblMetazoa" id="FBtr0075395">
    <property type="protein sequence ID" value="FBpp0075153"/>
    <property type="gene ID" value="FBgn0036641"/>
</dbReference>
<dbReference type="EnsemblMetazoa" id="FBtr0329921">
    <property type="protein sequence ID" value="FBpp0302954"/>
    <property type="gene ID" value="FBgn0036641"/>
</dbReference>
<dbReference type="GeneID" id="39844"/>
<dbReference type="KEGG" id="dme:Dmel_CG16725"/>
<dbReference type="UCSC" id="CG16725-RA">
    <property type="organism name" value="d. melanogaster"/>
</dbReference>
<dbReference type="AGR" id="FB:FBgn0036641"/>
<dbReference type="CTD" id="39844"/>
<dbReference type="FlyBase" id="FBgn0036641">
    <property type="gene designation" value="Smn"/>
</dbReference>
<dbReference type="VEuPathDB" id="VectorBase:FBgn0036641"/>
<dbReference type="eggNOG" id="KOG4327">
    <property type="taxonomic scope" value="Eukaryota"/>
</dbReference>
<dbReference type="GeneTree" id="ENSGT00940000153352"/>
<dbReference type="HOGENOM" id="CLU_077852_0_0_1"/>
<dbReference type="InParanoid" id="Q9VV74"/>
<dbReference type="OMA" id="MSMLTAW"/>
<dbReference type="OrthoDB" id="197400at2759"/>
<dbReference type="PhylomeDB" id="Q9VV74"/>
<dbReference type="SignaLink" id="Q9VV74"/>
<dbReference type="BioGRID-ORCS" id="39844">
    <property type="hits" value="0 hits in 3 CRISPR screens"/>
</dbReference>
<dbReference type="GenomeRNAi" id="39844"/>
<dbReference type="PRO" id="PR:Q9VV74"/>
<dbReference type="Proteomes" id="UP000000803">
    <property type="component" value="Chromosome 3L"/>
</dbReference>
<dbReference type="Bgee" id="FBgn0036641">
    <property type="expression patterns" value="Expressed in eye disc (Drosophila) and 147 other cell types or tissues"/>
</dbReference>
<dbReference type="GO" id="GO:0015030">
    <property type="term" value="C:Cajal body"/>
    <property type="evidence" value="ECO:0000314"/>
    <property type="project" value="FlyBase"/>
</dbReference>
<dbReference type="GO" id="GO:0005737">
    <property type="term" value="C:cytoplasm"/>
    <property type="evidence" value="ECO:0000314"/>
    <property type="project" value="UniProtKB"/>
</dbReference>
<dbReference type="GO" id="GO:0071254">
    <property type="term" value="C:cytoplasmic U snRNP body"/>
    <property type="evidence" value="ECO:0000314"/>
    <property type="project" value="UniProtKB"/>
</dbReference>
<dbReference type="GO" id="GO:0097504">
    <property type="term" value="C:Gemini of Cajal bodies"/>
    <property type="evidence" value="ECO:0000314"/>
    <property type="project" value="UniProtKB"/>
</dbReference>
<dbReference type="GO" id="GO:0031674">
    <property type="term" value="C:I band"/>
    <property type="evidence" value="ECO:0000314"/>
    <property type="project" value="FlyBase"/>
</dbReference>
<dbReference type="GO" id="GO:0031594">
    <property type="term" value="C:neuromuscular junction"/>
    <property type="evidence" value="ECO:0000314"/>
    <property type="project" value="FlyBase"/>
</dbReference>
<dbReference type="GO" id="GO:0005634">
    <property type="term" value="C:nucleus"/>
    <property type="evidence" value="ECO:0000314"/>
    <property type="project" value="FlyBase"/>
</dbReference>
<dbReference type="GO" id="GO:0005886">
    <property type="term" value="C:plasma membrane"/>
    <property type="evidence" value="ECO:0007669"/>
    <property type="project" value="GOC"/>
</dbReference>
<dbReference type="GO" id="GO:0098794">
    <property type="term" value="C:postsynapse"/>
    <property type="evidence" value="ECO:0007669"/>
    <property type="project" value="GOC"/>
</dbReference>
<dbReference type="GO" id="GO:0034730">
    <property type="term" value="C:SmD-containing SMN-Sm protein complex"/>
    <property type="evidence" value="ECO:0000314"/>
    <property type="project" value="UniProtKB"/>
</dbReference>
<dbReference type="GO" id="GO:0032797">
    <property type="term" value="C:SMN complex"/>
    <property type="evidence" value="ECO:0000314"/>
    <property type="project" value="FlyBase"/>
</dbReference>
<dbReference type="GO" id="GO:0034718">
    <property type="term" value="C:SMN-Gemin2 complex"/>
    <property type="evidence" value="ECO:0000314"/>
    <property type="project" value="UniProtKB"/>
</dbReference>
<dbReference type="GO" id="GO:0005681">
    <property type="term" value="C:spliceosomal complex"/>
    <property type="evidence" value="ECO:0007669"/>
    <property type="project" value="UniProtKB-KW"/>
</dbReference>
<dbReference type="GO" id="GO:0030018">
    <property type="term" value="C:Z disc"/>
    <property type="evidence" value="ECO:0000314"/>
    <property type="project" value="FlyBase"/>
</dbReference>
<dbReference type="GO" id="GO:0051393">
    <property type="term" value="F:alpha-actinin binding"/>
    <property type="evidence" value="ECO:0000353"/>
    <property type="project" value="FlyBase"/>
</dbReference>
<dbReference type="GO" id="GO:0042802">
    <property type="term" value="F:identical protein binding"/>
    <property type="evidence" value="ECO:0000353"/>
    <property type="project" value="IntAct"/>
</dbReference>
<dbReference type="GO" id="GO:0003723">
    <property type="term" value="F:RNA binding"/>
    <property type="evidence" value="ECO:0007669"/>
    <property type="project" value="InterPro"/>
</dbReference>
<dbReference type="GO" id="GO:0097113">
    <property type="term" value="P:AMPA glutamate receptor clustering"/>
    <property type="evidence" value="ECO:0000315"/>
    <property type="project" value="UniProtKB"/>
</dbReference>
<dbReference type="GO" id="GO:0045175">
    <property type="term" value="P:basal protein localization"/>
    <property type="evidence" value="ECO:0000315"/>
    <property type="project" value="UniProtKB"/>
</dbReference>
<dbReference type="GO" id="GO:0007417">
    <property type="term" value="P:central nervous system development"/>
    <property type="evidence" value="ECO:0000315"/>
    <property type="project" value="UniProtKB"/>
</dbReference>
<dbReference type="GO" id="GO:0051276">
    <property type="term" value="P:chromosome organization"/>
    <property type="evidence" value="ECO:0000315"/>
    <property type="project" value="UniProtKB"/>
</dbReference>
<dbReference type="GO" id="GO:1990194">
    <property type="term" value="P:cytoplasmic U snRNP body assembly"/>
    <property type="evidence" value="ECO:0000315"/>
    <property type="project" value="UniProtKB"/>
</dbReference>
<dbReference type="GO" id="GO:0009792">
    <property type="term" value="P:embryo development ending in birth or egg hatching"/>
    <property type="evidence" value="ECO:0000315"/>
    <property type="project" value="UniProtKB"/>
</dbReference>
<dbReference type="GO" id="GO:0060079">
    <property type="term" value="P:excitatory postsynaptic potential"/>
    <property type="evidence" value="ECO:0000315"/>
    <property type="project" value="UniProtKB"/>
</dbReference>
<dbReference type="GO" id="GO:0002164">
    <property type="term" value="P:larval development"/>
    <property type="evidence" value="ECO:0000315"/>
    <property type="project" value="UniProtKB"/>
</dbReference>
<dbReference type="GO" id="GO:0008345">
    <property type="term" value="P:larval locomotory behavior"/>
    <property type="evidence" value="ECO:0000315"/>
    <property type="project" value="UniProtKB"/>
</dbReference>
<dbReference type="GO" id="GO:0035149">
    <property type="term" value="P:lumen formation, open tracheal system"/>
    <property type="evidence" value="ECO:0000315"/>
    <property type="project" value="FlyBase"/>
</dbReference>
<dbReference type="GO" id="GO:0000398">
    <property type="term" value="P:mRNA splicing, via spliceosome"/>
    <property type="evidence" value="ECO:0000315"/>
    <property type="project" value="UniProtKB"/>
</dbReference>
<dbReference type="GO" id="GO:0007528">
    <property type="term" value="P:neuromuscular junction development"/>
    <property type="evidence" value="ECO:0000315"/>
    <property type="project" value="UniProtKB"/>
</dbReference>
<dbReference type="GO" id="GO:0007274">
    <property type="term" value="P:neuromuscular synaptic transmission"/>
    <property type="evidence" value="ECO:0000315"/>
    <property type="project" value="UniProtKB"/>
</dbReference>
<dbReference type="GO" id="GO:0048601">
    <property type="term" value="P:oocyte morphogenesis"/>
    <property type="evidence" value="ECO:0000315"/>
    <property type="project" value="UniProtKB"/>
</dbReference>
<dbReference type="GO" id="GO:0033962">
    <property type="term" value="P:P-body assembly"/>
    <property type="evidence" value="ECO:0000315"/>
    <property type="project" value="UniProtKB"/>
</dbReference>
<dbReference type="GO" id="GO:0045887">
    <property type="term" value="P:positive regulation of synaptic assembly at neuromuscular junction"/>
    <property type="evidence" value="ECO:0000316"/>
    <property type="project" value="FlyBase"/>
</dbReference>
<dbReference type="GO" id="GO:0032224">
    <property type="term" value="P:positive regulation of synaptic transmission, cholinergic"/>
    <property type="evidence" value="ECO:0000315"/>
    <property type="project" value="UniProtKB"/>
</dbReference>
<dbReference type="GO" id="GO:0022618">
    <property type="term" value="P:protein-RNA complex assembly"/>
    <property type="evidence" value="ECO:0000315"/>
    <property type="project" value="FlyBase"/>
</dbReference>
<dbReference type="GO" id="GO:0000387">
    <property type="term" value="P:spliceosomal snRNP assembly"/>
    <property type="evidence" value="ECO:0000314"/>
    <property type="project" value="UniProtKB"/>
</dbReference>
<dbReference type="GO" id="GO:0048863">
    <property type="term" value="P:stem cell differentiation"/>
    <property type="evidence" value="ECO:0000315"/>
    <property type="project" value="UniProtKB"/>
</dbReference>
<dbReference type="GO" id="GO:0017145">
    <property type="term" value="P:stem cell division"/>
    <property type="evidence" value="ECO:0000315"/>
    <property type="project" value="UniProtKB"/>
</dbReference>
<dbReference type="GO" id="GO:0072089">
    <property type="term" value="P:stem cell proliferation"/>
    <property type="evidence" value="ECO:0000315"/>
    <property type="project" value="UniProtKB"/>
</dbReference>
<dbReference type="GO" id="GO:0072553">
    <property type="term" value="P:terminal button organization"/>
    <property type="evidence" value="ECO:0000315"/>
    <property type="project" value="UniProtKB"/>
</dbReference>
<dbReference type="CDD" id="cd22852">
    <property type="entry name" value="SMN_C"/>
    <property type="match status" value="1"/>
</dbReference>
<dbReference type="CDD" id="cd22851">
    <property type="entry name" value="SMN_N"/>
    <property type="match status" value="1"/>
</dbReference>
<dbReference type="CDD" id="cd20398">
    <property type="entry name" value="Tudor_SMN"/>
    <property type="match status" value="1"/>
</dbReference>
<dbReference type="Gene3D" id="2.30.30.140">
    <property type="match status" value="1"/>
</dbReference>
<dbReference type="InterPro" id="IPR040424">
    <property type="entry name" value="Smn1"/>
</dbReference>
<dbReference type="InterPro" id="IPR047313">
    <property type="entry name" value="SMN_C"/>
</dbReference>
<dbReference type="InterPro" id="IPR049481">
    <property type="entry name" value="SMN_G2-BD"/>
</dbReference>
<dbReference type="InterPro" id="IPR010304">
    <property type="entry name" value="SMN_Tudor"/>
</dbReference>
<dbReference type="InterPro" id="IPR002999">
    <property type="entry name" value="Tudor"/>
</dbReference>
<dbReference type="InterPro" id="IPR047298">
    <property type="entry name" value="Tudor_SMN_eumet"/>
</dbReference>
<dbReference type="PANTHER" id="PTHR39267:SF1">
    <property type="entry name" value="SURVIVAL MOTOR NEURON PROTEIN"/>
    <property type="match status" value="1"/>
</dbReference>
<dbReference type="PANTHER" id="PTHR39267">
    <property type="entry name" value="SURVIVAL MOTOR NEURON-LIKE PROTEIN 1"/>
    <property type="match status" value="1"/>
</dbReference>
<dbReference type="Pfam" id="PF20636">
    <property type="entry name" value="SMN_G2-BD"/>
    <property type="match status" value="1"/>
</dbReference>
<dbReference type="Pfam" id="PF06003">
    <property type="entry name" value="SMN_Tudor"/>
    <property type="match status" value="1"/>
</dbReference>
<dbReference type="Pfam" id="PF20635">
    <property type="entry name" value="SMN_YG-box"/>
    <property type="match status" value="1"/>
</dbReference>
<dbReference type="SMART" id="SM00333">
    <property type="entry name" value="TUDOR"/>
    <property type="match status" value="1"/>
</dbReference>
<dbReference type="SUPFAM" id="SSF63748">
    <property type="entry name" value="Tudor/PWWP/MBT"/>
    <property type="match status" value="1"/>
</dbReference>
<proteinExistence type="evidence at protein level"/>
<organism evidence="35">
    <name type="scientific">Drosophila melanogaster</name>
    <name type="common">Fruit fly</name>
    <dbReference type="NCBI Taxonomy" id="7227"/>
    <lineage>
        <taxon>Eukaryota</taxon>
        <taxon>Metazoa</taxon>
        <taxon>Ecdysozoa</taxon>
        <taxon>Arthropoda</taxon>
        <taxon>Hexapoda</taxon>
        <taxon>Insecta</taxon>
        <taxon>Pterygota</taxon>
        <taxon>Neoptera</taxon>
        <taxon>Endopterygota</taxon>
        <taxon>Diptera</taxon>
        <taxon>Brachycera</taxon>
        <taxon>Muscomorpha</taxon>
        <taxon>Ephydroidea</taxon>
        <taxon>Drosophilidae</taxon>
        <taxon>Drosophila</taxon>
        <taxon>Sophophora</taxon>
    </lineage>
</organism>
<accession>Q9VV74</accession>
<sequence>MSDETNAAVWDDSLLVKTYDESVGLAREALARRLADSTNKREEENAAAAEEEAGEISATGGATSPEPVSFKVGDYARATYVDGVDYEGAVVSINEEKGTCVLRYLGYENEQEVLLVDLLPSWGKRVRREQFLIAKKDEDEQLSRPKASAGSHSKTPKSSRRSRISGGLVMPPMPPVPPMIVGQGDGAEQDFVAMLTAWYMSGYYTGLYQGKKEASTTSGKKKTPKK</sequence>
<keyword id="KW-0002">3D-structure</keyword>
<keyword id="KW-0963">Cytoplasm</keyword>
<keyword id="KW-0217">Developmental protein</keyword>
<keyword id="KW-0507">mRNA processing</keyword>
<keyword id="KW-0508">mRNA splicing</keyword>
<keyword id="KW-0539">Nucleus</keyword>
<keyword id="KW-1185">Reference proteome</keyword>
<keyword id="KW-0747">Spliceosome</keyword>
<gene>
    <name evidence="33" type="primary">Smn</name>
    <name evidence="33" type="ORF">CG16725</name>
</gene>
<feature type="chain" id="PRO_0000424374" description="Survival motor neuron protein">
    <location>
        <begin position="1"/>
        <end position="226"/>
    </location>
</feature>
<feature type="domain" description="Tudor" evidence="1">
    <location>
        <begin position="69"/>
        <end position="128"/>
    </location>
</feature>
<feature type="region of interest" description="Disordered" evidence="2">
    <location>
        <begin position="35"/>
        <end position="68"/>
    </location>
</feature>
<feature type="region of interest" description="Disordered" evidence="2">
    <location>
        <begin position="137"/>
        <end position="172"/>
    </location>
</feature>
<feature type="region of interest" description="Required for homodimerization" evidence="3">
    <location>
        <begin position="159"/>
        <end position="226"/>
    </location>
</feature>
<feature type="compositionally biased region" description="Basic and acidic residues" evidence="2">
    <location>
        <begin position="35"/>
        <end position="44"/>
    </location>
</feature>
<feature type="compositionally biased region" description="Basic residues" evidence="2">
    <location>
        <begin position="154"/>
        <end position="163"/>
    </location>
</feature>
<feature type="mutagenesis site" description="Does not affect homodimer formation." evidence="20">
    <original>D</original>
    <variation>V</variation>
    <location>
        <position position="20"/>
    </location>
</feature>
<feature type="mutagenesis site" description="Does not affect homodimer formation." evidence="20">
    <original>F</original>
    <variation>S</variation>
    <location>
        <position position="70"/>
    </location>
</feature>
<feature type="mutagenesis site" description="In allele Smn-B; homozygous lethal at late larval stages and abolishes homodimerization." evidence="5">
    <original>S</original>
    <variation>F</variation>
    <location>
        <position position="201"/>
    </location>
</feature>
<feature type="mutagenesis site" description="In allele Smn-73Ao; homozygous lethal at late larval stages and abolishes homodimerization." evidence="5">
    <original>G</original>
    <variation>S</variation>
    <location>
        <position position="202"/>
    </location>
</feature>
<feature type="mutagenesis site" description="Weakly inhibits homodimer formation." evidence="20">
    <original>Y</original>
    <variation>C</variation>
    <location>
        <position position="203"/>
    </location>
</feature>
<feature type="mutagenesis site" description="Rescues larval viability and locomotion defects and only partially restores U5 and U12 snRNA levels in the null mutant. Weakly inhibits homodimer formation. Does not affect protein stability." evidence="20">
    <original>T</original>
    <variation>I</variation>
    <location>
        <position position="205"/>
    </location>
</feature>
<feature type="mutagenesis site" description="Inhibits homodimer formation." evidence="20">
    <original>G</original>
    <variation>S</variation>
    <location>
        <position position="206"/>
    </location>
</feature>
<feature type="helix" evidence="36">
    <location>
        <begin position="15"/>
        <end position="23"/>
    </location>
</feature>